<reference key="1">
    <citation type="journal article" date="1989" name="Mol. Gen. Genet.">
        <title>Identification of a gene conferring resistance to zinc and cadmium ions in the yeast Saccharomyces cerevisiae.</title>
        <authorList>
            <person name="Kamizono A."/>
            <person name="Nishizawa M."/>
            <person name="Teranishi Y."/>
            <person name="Murata K."/>
            <person name="Kimura A."/>
        </authorList>
    </citation>
    <scope>NUCLEOTIDE SEQUENCE [GENOMIC DNA]</scope>
    <scope>FUNCTION</scope>
    <source>
        <strain>DKD-5D-H</strain>
    </source>
</reference>
<reference key="2">
    <citation type="journal article" date="1997" name="Nature">
        <title>The nucleotide sequence of Saccharomyces cerevisiae chromosome XIII.</title>
        <authorList>
            <person name="Bowman S."/>
            <person name="Churcher C.M."/>
            <person name="Badcock K."/>
            <person name="Brown D."/>
            <person name="Chillingworth T."/>
            <person name="Connor R."/>
            <person name="Dedman K."/>
            <person name="Devlin K."/>
            <person name="Gentles S."/>
            <person name="Hamlin N."/>
            <person name="Hunt S."/>
            <person name="Jagels K."/>
            <person name="Lye G."/>
            <person name="Moule S."/>
            <person name="Odell C."/>
            <person name="Pearson D."/>
            <person name="Rajandream M.A."/>
            <person name="Rice P."/>
            <person name="Skelton J."/>
            <person name="Walsh S.V."/>
            <person name="Whitehead S."/>
            <person name="Barrell B.G."/>
        </authorList>
    </citation>
    <scope>NUCLEOTIDE SEQUENCE [LARGE SCALE GENOMIC DNA]</scope>
    <source>
        <strain>ATCC 204508 / S288c</strain>
    </source>
</reference>
<reference key="3">
    <citation type="journal article" date="2014" name="G3 (Bethesda)">
        <title>The reference genome sequence of Saccharomyces cerevisiae: Then and now.</title>
        <authorList>
            <person name="Engel S.R."/>
            <person name="Dietrich F.S."/>
            <person name="Fisk D.G."/>
            <person name="Binkley G."/>
            <person name="Balakrishnan R."/>
            <person name="Costanzo M.C."/>
            <person name="Dwight S.S."/>
            <person name="Hitz B.C."/>
            <person name="Karra K."/>
            <person name="Nash R.S."/>
            <person name="Weng S."/>
            <person name="Wong E.D."/>
            <person name="Lloyd P."/>
            <person name="Skrzypek M.S."/>
            <person name="Miyasato S.R."/>
            <person name="Simison M."/>
            <person name="Cherry J.M."/>
        </authorList>
    </citation>
    <scope>GENOME REANNOTATION</scope>
    <source>
        <strain>ATCC 204508 / S288c</strain>
    </source>
</reference>
<reference key="4">
    <citation type="journal article" date="2007" name="Genome Res.">
        <title>Approaching a complete repository of sequence-verified protein-encoding clones for Saccharomyces cerevisiae.</title>
        <authorList>
            <person name="Hu Y."/>
            <person name="Rolfs A."/>
            <person name="Bhullar B."/>
            <person name="Murthy T.V.S."/>
            <person name="Zhu C."/>
            <person name="Berger M.F."/>
            <person name="Camargo A.A."/>
            <person name="Kelley F."/>
            <person name="McCarron S."/>
            <person name="Jepson D."/>
            <person name="Richardson A."/>
            <person name="Raphael J."/>
            <person name="Moreira D."/>
            <person name="Taycher E."/>
            <person name="Zuo D."/>
            <person name="Mohr S."/>
            <person name="Kane M.F."/>
            <person name="Williamson J."/>
            <person name="Simpson A.J.G."/>
            <person name="Bulyk M.L."/>
            <person name="Harlow E."/>
            <person name="Marsischky G."/>
            <person name="Kolodner R.D."/>
            <person name="LaBaer J."/>
        </authorList>
    </citation>
    <scope>NUCLEOTIDE SEQUENCE [GENOMIC DNA]</scope>
    <source>
        <strain>ATCC 204508 / S288c</strain>
    </source>
</reference>
<reference key="5">
    <citation type="journal article" date="1998" name="J. Biol. Chem.">
        <title>Defects in the yeast high affinity iron transport system result in increased metal sensitivity because of the increased expression of transporters with a broad transition metal specificity.</title>
        <authorList>
            <person name="Li L."/>
            <person name="Kaplan J."/>
        </authorList>
    </citation>
    <scope>FUNCTION</scope>
    <scope>SUBCELLULAR LOCATION</scope>
</reference>
<reference key="6">
    <citation type="journal article" date="2000" name="EMBO J.">
        <title>Zinc transporters that regulate vacuolar zinc storage in Saccharomyces cerevisiae.</title>
        <authorList>
            <person name="MacDiarmid C.W."/>
            <person name="Gaither L.A."/>
            <person name="Eide D."/>
        </authorList>
    </citation>
    <scope>FUNCTION</scope>
    <scope>DISRUPTION PHENOTYPE</scope>
</reference>
<reference key="7">
    <citation type="journal article" date="2001" name="Biochem. Biophys. Res. Commun.">
        <title>The Zrc1 is involved in zinc transport system between vacuole and cytosol in Saccharomyces cerevisiae.</title>
        <authorList>
            <person name="Miyabe S."/>
            <person name="Izawa S."/>
            <person name="Inoue Y."/>
        </authorList>
    </citation>
    <scope>SUBCELLULAR LOCATION</scope>
    <scope>FUNCTION</scope>
    <scope>TRANSPORT CATALYTIC ACTIVITY</scope>
    <scope>DISRUPTION PHENOTYPE</scope>
    <scope>DOMAIN</scope>
</reference>
<reference key="8">
    <citation type="journal article" date="2002" name="J. Biol. Chem.">
        <title>Biochemical properties of vacuolar zinc transport systems of Saccharomyces cerevisiae.</title>
        <authorList>
            <person name="MacDiarmid C.W."/>
            <person name="Milanick M.A."/>
            <person name="Eide D.J."/>
        </authorList>
    </citation>
    <scope>FUNCTION</scope>
</reference>
<reference key="9">
    <citation type="journal article" date="2003" name="J. Biol. Chem.">
        <title>Induction of the ZRC1 metal tolerance gene in zinc-limited yeast confers resistance to zinc shock.</title>
        <authorList>
            <person name="MacDiarmid C.W."/>
            <person name="Milanick M.A."/>
            <person name="Eide D.J."/>
        </authorList>
    </citation>
    <scope>FUNCTION</scope>
    <scope>INDUCTION</scope>
</reference>
<reference key="10">
    <citation type="journal article" date="2003" name="Nature">
        <title>Global analysis of protein expression in yeast.</title>
        <authorList>
            <person name="Ghaemmaghami S."/>
            <person name="Huh W.-K."/>
            <person name="Bower K."/>
            <person name="Howson R.W."/>
            <person name="Belle A."/>
            <person name="Dephoure N."/>
            <person name="O'Shea E.K."/>
            <person name="Weissman J.S."/>
        </authorList>
    </citation>
    <scope>LEVEL OF PROTEIN EXPRESSION [LARGE SCALE ANALYSIS]</scope>
</reference>
<reference key="11">
    <citation type="journal article" date="2005" name="Genome Res.">
        <title>The Yeast Gene Order Browser: combining curated homology and syntenic context reveals gene fate in polyploid species.</title>
        <authorList>
            <person name="Byrne K.P."/>
            <person name="Wolfe K.H."/>
        </authorList>
    </citation>
    <scope>IDENTIFIGATION OF PARALOGS</scope>
</reference>
<reference key="12">
    <citation type="journal article" date="2006" name="Proc. Natl. Acad. Sci. U.S.A.">
        <title>A global topology map of the Saccharomyces cerevisiae membrane proteome.</title>
        <authorList>
            <person name="Kim H."/>
            <person name="Melen K."/>
            <person name="Oesterberg M."/>
            <person name="von Heijne G."/>
        </authorList>
    </citation>
    <scope>TOPOLOGY [LARGE SCALE ANALYSIS]</scope>
    <source>
        <strain>ATCC 208353 / W303-1A</strain>
    </source>
</reference>
<reference key="13">
    <citation type="journal article" date="2007" name="J. Proteome Res.">
        <title>Large-scale phosphorylation analysis of alpha-factor-arrested Saccharomyces cerevisiae.</title>
        <authorList>
            <person name="Li X."/>
            <person name="Gerber S.A."/>
            <person name="Rudner A.D."/>
            <person name="Beausoleil S.A."/>
            <person name="Haas W."/>
            <person name="Villen J."/>
            <person name="Elias J.E."/>
            <person name="Gygi S.P."/>
        </authorList>
    </citation>
    <scope>PHOSPHORYLATION [LARGE SCALE ANALYSIS] AT SER-387; SER-393 AND SER-397</scope>
    <scope>IDENTIFICATION BY MASS SPECTROMETRY [LARGE SCALE ANALYSIS]</scope>
    <source>
        <strain>ADR376</strain>
    </source>
</reference>
<reference key="14">
    <citation type="journal article" date="2008" name="J. Biol. Chem.">
        <title>A single amino acid change in the yeast vacuolar metal transporters ZRC1 and COT1 alters their substrate specificity.</title>
        <authorList>
            <person name="Lin H."/>
            <person name="Kumanovics A."/>
            <person name="Nelson J.M."/>
            <person name="Warner D.E."/>
            <person name="Ward D.M."/>
            <person name="Kaplan J."/>
        </authorList>
    </citation>
    <scope>FUNCTION</scope>
    <scope>MUTAGENESIS OF ASN-44</scope>
</reference>
<reference key="15">
    <citation type="journal article" date="2009" name="Science">
        <title>Global analysis of Cdk1 substrate phosphorylation sites provides insights into evolution.</title>
        <authorList>
            <person name="Holt L.J."/>
            <person name="Tuch B.B."/>
            <person name="Villen J."/>
            <person name="Johnson A.D."/>
            <person name="Gygi S.P."/>
            <person name="Morgan D.O."/>
        </authorList>
    </citation>
    <scope>PHOSPHORYLATION [LARGE SCALE ANALYSIS] AT SER-387; SER-393 AND SER-397</scope>
    <scope>IDENTIFICATION BY MASS SPECTROMETRY [LARGE SCALE ANALYSIS]</scope>
</reference>
<reference key="16">
    <citation type="journal article" date="2012" name="Proc. Natl. Acad. Sci. U.S.A.">
        <title>N-terminal acetylome analyses and functional insights of the N-terminal acetyltransferase NatB.</title>
        <authorList>
            <person name="Van Damme P."/>
            <person name="Lasa M."/>
            <person name="Polevoda B."/>
            <person name="Gazquez C."/>
            <person name="Elosegui-Artola A."/>
            <person name="Kim D.S."/>
            <person name="De Juan-Pardo E."/>
            <person name="Demeyer K."/>
            <person name="Hole K."/>
            <person name="Larrea E."/>
            <person name="Timmerman E."/>
            <person name="Prieto J."/>
            <person name="Arnesen T."/>
            <person name="Sherman F."/>
            <person name="Gevaert K."/>
            <person name="Aldabe R."/>
        </authorList>
    </citation>
    <scope>IDENTIFICATION BY MASS SPECTROMETRY [LARGE SCALE ANALYSIS]</scope>
</reference>
<reference key="17">
    <citation type="journal article" date="2012" name="Proteomics">
        <title>Sites of ubiquitin attachment in Saccharomyces cerevisiae.</title>
        <authorList>
            <person name="Starita L.M."/>
            <person name="Lo R.S."/>
            <person name="Eng J.K."/>
            <person name="von Haller P.D."/>
            <person name="Fields S."/>
        </authorList>
    </citation>
    <scope>UBIQUITINATION [LARGE SCALE ANALYSIS] AT LYS-357</scope>
    <scope>IDENTIFICATION BY MASS SPECTROMETRY [LARGE SCALE ANALYSIS]</scope>
</reference>
<proteinExistence type="evidence at protein level"/>
<comment type="function">
    <text evidence="3 4 5 6 9 10">Vacuolar transporter that regulates zinc homeostasis by mediating zinc transport and storage into the vacuole (PubMed:10856230, PubMed:11263974, PubMed:12161436, PubMed:12556516, PubMed:18930916, PubMed:2693940). ZRC1 senses zinc availability in the cytosol, which might be performed through the histidine repeat motifs, and transports zinc from the cytosol to the vacuole if zinc in cytosol is abundant, conferring resistance to zinc toxicity (PubMed:11263974). Plays a role in resistance to zinc shock resulting from sudden influx of zinc into cytoplasm when ZRT1 and ZRT2 are induced in response to zinc depletion (PubMed:11263974, PubMed:12556516).</text>
</comment>
<comment type="catalytic activity">
    <reaction evidence="4">
        <text>Zn(2+)(in) = Zn(2+)(out)</text>
        <dbReference type="Rhea" id="RHEA:29351"/>
        <dbReference type="ChEBI" id="CHEBI:29105"/>
    </reaction>
    <physiologicalReaction direction="left-to-right" evidence="4">
        <dbReference type="Rhea" id="RHEA:29352"/>
    </physiologicalReaction>
</comment>
<comment type="interaction">
    <interactant intactId="EBI-29667">
        <id>P20107</id>
    </interactant>
    <interactant intactId="EBI-28581">
        <id>P53756</id>
        <label>PDR18</label>
    </interactant>
    <organismsDiffer>false</organismsDiffer>
    <experiments>2</experiments>
</comment>
<comment type="subcellular location">
    <subcellularLocation>
        <location evidence="4 11">Vacuole membrane</location>
        <topology evidence="1">Multi-pass membrane protein</topology>
    </subcellularLocation>
</comment>
<comment type="induction">
    <text evidence="6">Expression is induced in zinc-limited conditions by the zinc-responsive transcription factor ZAP1.</text>
</comment>
<comment type="domain">
    <text evidence="15">Contains 3 histidine repeat motifs between the 4th and 5th transmembrane, exposed to the cytoplasm, that may be involved in the binding site of zinc.</text>
</comment>
<comment type="disruption phenotype">
    <text evidence="3 4">Reduces zinc transport into the vacuole and hence limits the over-accumulation of zinc caused by the deletion of ZRT3.</text>
</comment>
<comment type="miscellaneous">
    <text evidence="7">Present with 8200 molecules/cell in log phase SD medium.</text>
</comment>
<comment type="miscellaneous">
    <text evidence="8">ZRC1 has a paralog, COT1, that arose from the whole genome duplication.</text>
</comment>
<comment type="similarity">
    <text evidence="14">Belongs to the cation diffusion facilitator (CDF) transporter (TC 2.A.4) family. SLC30A subfamily.</text>
</comment>
<keyword id="KW-0104">Cadmium</keyword>
<keyword id="KW-0105">Cadmium resistance</keyword>
<keyword id="KW-0406">Ion transport</keyword>
<keyword id="KW-1017">Isopeptide bond</keyword>
<keyword id="KW-0472">Membrane</keyword>
<keyword id="KW-0597">Phosphoprotein</keyword>
<keyword id="KW-1185">Reference proteome</keyword>
<keyword id="KW-0677">Repeat</keyword>
<keyword id="KW-0812">Transmembrane</keyword>
<keyword id="KW-1133">Transmembrane helix</keyword>
<keyword id="KW-0813">Transport</keyword>
<keyword id="KW-0832">Ubl conjugation</keyword>
<keyword id="KW-0926">Vacuole</keyword>
<keyword id="KW-0862">Zinc</keyword>
<keyword id="KW-0864">Zinc transport</keyword>
<protein>
    <recommendedName>
        <fullName evidence="13">Vacuolar zinc transporter ZRC1</fullName>
    </recommendedName>
    <alternativeName>
        <fullName evidence="12">Zinc resistance conferring protein 1</fullName>
    </alternativeName>
    <alternativeName>
        <fullName evidence="12">Zinc/cadmium resistance protein ZRC1</fullName>
    </alternativeName>
</protein>
<sequence>MITGKELRIISLLTLDTVFFLLEITIGYMSHSLALIADSFHMLNDIISLLVALWAVDVAKNRGPDAKYTYGWKRAEILGALINAVFLIALCFSIMIEALQRLIEPQEIQNPRLVLYVGVAGLISNVVGLFLFHDHGSDSLHSHSHGSVESGNNDLDIESNATHSHSHASLPNDNLAIDEDAISSPGPSGQIGEVLPQSVVNRLSNESQPLLNHDDHDHSHESKKPGHRSLNMHGVFLHVLGDALGNIGVIAAALFIWKTEYSWRYYSDPIVSLIITIIIFSSALPLSRRASRILLQATPSTISADQIQREILAVPGVIAVHDFHVWNLTESIYIASIHVQIDCAPDKFMSSAKLIRKIFHQHGIHSATVQPEFVSGDVNEDIRRRFSIIAGGSPSSSQEAFDSHGNTEHGRKKRSPTAYGATTASSNCIVDDAVNCNTSNCL</sequence>
<feature type="chain" id="PRO_0000206103" description="Vacuolar zinc transporter ZRC1">
    <location>
        <begin position="1"/>
        <end position="442"/>
    </location>
</feature>
<feature type="topological domain" description="Cytoplasmic" evidence="14">
    <location>
        <begin position="1"/>
        <end position="8"/>
    </location>
</feature>
<feature type="transmembrane region" description="Helical" evidence="1">
    <location>
        <begin position="9"/>
        <end position="29"/>
    </location>
</feature>
<feature type="topological domain" description="Vacuolar" evidence="14">
    <location>
        <begin position="30"/>
        <end position="32"/>
    </location>
</feature>
<feature type="transmembrane region" description="Helical" evidence="1">
    <location>
        <begin position="33"/>
        <end position="53"/>
    </location>
</feature>
<feature type="topological domain" description="Cytoplasmic" evidence="14">
    <location>
        <begin position="54"/>
        <end position="75"/>
    </location>
</feature>
<feature type="transmembrane region" description="Helical" evidence="1">
    <location>
        <begin position="76"/>
        <end position="96"/>
    </location>
</feature>
<feature type="topological domain" description="Vacuolar" evidence="14">
    <location>
        <begin position="97"/>
        <end position="112"/>
    </location>
</feature>
<feature type="transmembrane region" description="Helical" evidence="1">
    <location>
        <begin position="113"/>
        <end position="133"/>
    </location>
</feature>
<feature type="topological domain" description="Cytoplasmic" evidence="14">
    <location>
        <begin position="134"/>
        <end position="235"/>
    </location>
</feature>
<feature type="transmembrane region" description="Helical" evidence="1">
    <location>
        <begin position="236"/>
        <end position="256"/>
    </location>
</feature>
<feature type="topological domain" description="Vacuolar" evidence="14">
    <location>
        <begin position="257"/>
        <end position="265"/>
    </location>
</feature>
<feature type="transmembrane region" description="Helical" evidence="1">
    <location>
        <begin position="266"/>
        <end position="286"/>
    </location>
</feature>
<feature type="topological domain" description="Cytoplasmic" evidence="14">
    <location>
        <begin position="287"/>
        <end position="442"/>
    </location>
</feature>
<feature type="region of interest" description="Disordered" evidence="2">
    <location>
        <begin position="141"/>
        <end position="170"/>
    </location>
</feature>
<feature type="region of interest" description="Disordered" evidence="2">
    <location>
        <begin position="208"/>
        <end position="227"/>
    </location>
</feature>
<feature type="region of interest" description="Disordered" evidence="2">
    <location>
        <begin position="391"/>
        <end position="419"/>
    </location>
</feature>
<feature type="short sequence motif" description="Histidine repeat 1" evidence="15">
    <location>
        <begin position="141"/>
        <end position="145"/>
    </location>
</feature>
<feature type="short sequence motif" description="Histidine repeat 2" evidence="15">
    <location>
        <begin position="163"/>
        <end position="167"/>
    </location>
</feature>
<feature type="short sequence motif" description="Histidine repeat 3" evidence="15">
    <location>
        <begin position="216"/>
        <end position="220"/>
    </location>
</feature>
<feature type="compositionally biased region" description="Polar residues" evidence="2">
    <location>
        <begin position="149"/>
        <end position="170"/>
    </location>
</feature>
<feature type="compositionally biased region" description="Basic and acidic residues" evidence="2">
    <location>
        <begin position="212"/>
        <end position="224"/>
    </location>
</feature>
<feature type="modified residue" description="Phosphoserine" evidence="16 17">
    <location>
        <position position="387"/>
    </location>
</feature>
<feature type="modified residue" description="Phosphoserine" evidence="16 17">
    <location>
        <position position="393"/>
    </location>
</feature>
<feature type="modified residue" description="Phosphoserine" evidence="16 17">
    <location>
        <position position="397"/>
    </location>
</feature>
<feature type="cross-link" description="Glycyl lysine isopeptide (Lys-Gly) (interchain with G-Cter in ubiquitin)" evidence="18">
    <location>
        <position position="357"/>
    </location>
</feature>
<feature type="mutagenesis site" description="Changed the substrate specificity of the transporter from zinc to iron." evidence="9">
    <original>N</original>
    <variation>I</variation>
    <location>
        <position position="44"/>
    </location>
</feature>
<feature type="sequence conflict" description="In Ref. 1; CAB56542." evidence="14" ref="1">
    <original>R</original>
    <variation>S</variation>
    <location>
        <position position="414"/>
    </location>
</feature>
<feature type="sequence conflict" description="In Ref. 1; CAB56542." evidence="14" ref="1">
    <original>T</original>
    <variation>I</variation>
    <location>
        <position position="417"/>
    </location>
</feature>
<evidence type="ECO:0000255" key="1"/>
<evidence type="ECO:0000256" key="2">
    <source>
        <dbReference type="SAM" id="MobiDB-lite"/>
    </source>
</evidence>
<evidence type="ECO:0000269" key="3">
    <source>
    </source>
</evidence>
<evidence type="ECO:0000269" key="4">
    <source>
    </source>
</evidence>
<evidence type="ECO:0000269" key="5">
    <source>
    </source>
</evidence>
<evidence type="ECO:0000269" key="6">
    <source>
    </source>
</evidence>
<evidence type="ECO:0000269" key="7">
    <source>
    </source>
</evidence>
<evidence type="ECO:0000269" key="8">
    <source>
    </source>
</evidence>
<evidence type="ECO:0000269" key="9">
    <source>
    </source>
</evidence>
<evidence type="ECO:0000269" key="10">
    <source>
    </source>
</evidence>
<evidence type="ECO:0000269" key="11">
    <source>
    </source>
</evidence>
<evidence type="ECO:0000303" key="12">
    <source>
    </source>
</evidence>
<evidence type="ECO:0000303" key="13">
    <source>
    </source>
</evidence>
<evidence type="ECO:0000305" key="14"/>
<evidence type="ECO:0000305" key="15">
    <source>
    </source>
</evidence>
<evidence type="ECO:0007744" key="16">
    <source>
    </source>
</evidence>
<evidence type="ECO:0007744" key="17">
    <source>
    </source>
</evidence>
<evidence type="ECO:0007744" key="18">
    <source>
    </source>
</evidence>
<dbReference type="EMBL" id="X17537">
    <property type="protein sequence ID" value="CAB56542.1"/>
    <property type="molecule type" value="Genomic_DNA"/>
</dbReference>
<dbReference type="EMBL" id="Z48756">
    <property type="protein sequence ID" value="CAA88653.1"/>
    <property type="molecule type" value="Genomic_DNA"/>
</dbReference>
<dbReference type="EMBL" id="AY693213">
    <property type="protein sequence ID" value="AAT93232.1"/>
    <property type="molecule type" value="Genomic_DNA"/>
</dbReference>
<dbReference type="EMBL" id="BK006946">
    <property type="protein sequence ID" value="DAA10144.1"/>
    <property type="molecule type" value="Genomic_DNA"/>
</dbReference>
<dbReference type="PIR" id="S56057">
    <property type="entry name" value="S56057"/>
</dbReference>
<dbReference type="RefSeq" id="NP_013970.1">
    <property type="nucleotide sequence ID" value="NM_001182750.1"/>
</dbReference>
<dbReference type="SMR" id="P20107"/>
<dbReference type="BioGRID" id="35422">
    <property type="interactions" value="186"/>
</dbReference>
<dbReference type="DIP" id="DIP-2030N"/>
<dbReference type="FunCoup" id="P20107">
    <property type="interactions" value="315"/>
</dbReference>
<dbReference type="IntAct" id="P20107">
    <property type="interactions" value="27"/>
</dbReference>
<dbReference type="MINT" id="P20107"/>
<dbReference type="STRING" id="4932.YMR243C"/>
<dbReference type="TCDB" id="2.A.4.2.2">
    <property type="family name" value="the cation diffusion facilitator (cdf) family"/>
</dbReference>
<dbReference type="iPTMnet" id="P20107"/>
<dbReference type="PaxDb" id="4932-YMR243C"/>
<dbReference type="PeptideAtlas" id="P20107"/>
<dbReference type="EnsemblFungi" id="YMR243C_mRNA">
    <property type="protein sequence ID" value="YMR243C"/>
    <property type="gene ID" value="YMR243C"/>
</dbReference>
<dbReference type="GeneID" id="855284"/>
<dbReference type="KEGG" id="sce:YMR243C"/>
<dbReference type="AGR" id="SGD:S000004856"/>
<dbReference type="SGD" id="S000004856">
    <property type="gene designation" value="ZRC1"/>
</dbReference>
<dbReference type="VEuPathDB" id="FungiDB:YMR243C"/>
<dbReference type="eggNOG" id="KOG1483">
    <property type="taxonomic scope" value="Eukaryota"/>
</dbReference>
<dbReference type="GeneTree" id="ENSGT00940000172026"/>
<dbReference type="HOGENOM" id="CLU_013430_4_3_1"/>
<dbReference type="InParanoid" id="P20107"/>
<dbReference type="OMA" id="CLFHQHG"/>
<dbReference type="OrthoDB" id="9944568at2759"/>
<dbReference type="BioCyc" id="YEAST:G3O-32923-MONOMER"/>
<dbReference type="Reactome" id="R-SCE-425410">
    <property type="pathway name" value="Metal ion SLC transporters"/>
</dbReference>
<dbReference type="Reactome" id="R-SCE-435368">
    <property type="pathway name" value="Zinc efflux and compartmentalization by the SLC30 family"/>
</dbReference>
<dbReference type="BioGRID-ORCS" id="855284">
    <property type="hits" value="0 hits in 10 CRISPR screens"/>
</dbReference>
<dbReference type="PRO" id="PR:P20107"/>
<dbReference type="Proteomes" id="UP000002311">
    <property type="component" value="Chromosome XIII"/>
</dbReference>
<dbReference type="RNAct" id="P20107">
    <property type="molecule type" value="protein"/>
</dbReference>
<dbReference type="GO" id="GO:0000324">
    <property type="term" value="C:fungal-type vacuole"/>
    <property type="evidence" value="ECO:0000314"/>
    <property type="project" value="SGD"/>
</dbReference>
<dbReference type="GO" id="GO:0000329">
    <property type="term" value="C:fungal-type vacuole membrane"/>
    <property type="evidence" value="ECO:0000314"/>
    <property type="project" value="SGD"/>
</dbReference>
<dbReference type="GO" id="GO:0045121">
    <property type="term" value="C:membrane raft"/>
    <property type="evidence" value="ECO:0000314"/>
    <property type="project" value="SGD"/>
</dbReference>
<dbReference type="GO" id="GO:0005385">
    <property type="term" value="F:zinc ion transmembrane transporter activity"/>
    <property type="evidence" value="ECO:0000315"/>
    <property type="project" value="SGD"/>
</dbReference>
<dbReference type="GO" id="GO:0006882">
    <property type="term" value="P:intracellular zinc ion homeostasis"/>
    <property type="evidence" value="ECO:0000315"/>
    <property type="project" value="SGD"/>
</dbReference>
<dbReference type="GO" id="GO:0046686">
    <property type="term" value="P:response to cadmium ion"/>
    <property type="evidence" value="ECO:0007669"/>
    <property type="project" value="UniProtKB-KW"/>
</dbReference>
<dbReference type="GO" id="GO:0071577">
    <property type="term" value="P:zinc ion transmembrane transport"/>
    <property type="evidence" value="ECO:0000318"/>
    <property type="project" value="GO_Central"/>
</dbReference>
<dbReference type="Gene3D" id="1.20.1510.10">
    <property type="entry name" value="Cation efflux protein transmembrane domain"/>
    <property type="match status" value="1"/>
</dbReference>
<dbReference type="InterPro" id="IPR002524">
    <property type="entry name" value="Cation_efflux"/>
</dbReference>
<dbReference type="InterPro" id="IPR036837">
    <property type="entry name" value="Cation_efflux_CTD_sf"/>
</dbReference>
<dbReference type="InterPro" id="IPR027469">
    <property type="entry name" value="Cation_efflux_TMD_sf"/>
</dbReference>
<dbReference type="NCBIfam" id="TIGR01297">
    <property type="entry name" value="CDF"/>
    <property type="match status" value="1"/>
</dbReference>
<dbReference type="PANTHER" id="PTHR45820">
    <property type="entry name" value="FI23527P1"/>
    <property type="match status" value="1"/>
</dbReference>
<dbReference type="PANTHER" id="PTHR45820:SF4">
    <property type="entry name" value="ZINC TRANSPORTER 63C, ISOFORM F"/>
    <property type="match status" value="1"/>
</dbReference>
<dbReference type="Pfam" id="PF01545">
    <property type="entry name" value="Cation_efflux"/>
    <property type="match status" value="1"/>
</dbReference>
<dbReference type="SUPFAM" id="SSF160240">
    <property type="entry name" value="Cation efflux protein cytoplasmic domain-like"/>
    <property type="match status" value="1"/>
</dbReference>
<dbReference type="SUPFAM" id="SSF161111">
    <property type="entry name" value="Cation efflux protein transmembrane domain-like"/>
    <property type="match status" value="1"/>
</dbReference>
<accession>P20107</accession>
<accession>D6W070</accession>
<gene>
    <name evidence="12" type="primary">ZRC1</name>
    <name type="ordered locus">YMR243C</name>
    <name type="ORF">YM9408.05C</name>
</gene>
<organism>
    <name type="scientific">Saccharomyces cerevisiae (strain ATCC 204508 / S288c)</name>
    <name type="common">Baker's yeast</name>
    <dbReference type="NCBI Taxonomy" id="559292"/>
    <lineage>
        <taxon>Eukaryota</taxon>
        <taxon>Fungi</taxon>
        <taxon>Dikarya</taxon>
        <taxon>Ascomycota</taxon>
        <taxon>Saccharomycotina</taxon>
        <taxon>Saccharomycetes</taxon>
        <taxon>Saccharomycetales</taxon>
        <taxon>Saccharomycetaceae</taxon>
        <taxon>Saccharomyces</taxon>
    </lineage>
</organism>
<name>ZRC1_YEAST</name>